<accession>C3PG35</accession>
<comment type="function">
    <text evidence="1">The UvrABC repair system catalyzes the recognition and processing of DNA lesions. UvrC both incises the 5' and 3' sides of the lesion. The N-terminal half is responsible for the 3' incision and the C-terminal half is responsible for the 5' incision.</text>
</comment>
<comment type="subunit">
    <text evidence="1">Interacts with UvrB in an incision complex.</text>
</comment>
<comment type="subcellular location">
    <subcellularLocation>
        <location evidence="1">Cytoplasm</location>
    </subcellularLocation>
</comment>
<comment type="similarity">
    <text evidence="1">Belongs to the UvrC family.</text>
</comment>
<protein>
    <recommendedName>
        <fullName evidence="1">UvrABC system protein C</fullName>
        <shortName evidence="1">Protein UvrC</shortName>
    </recommendedName>
    <alternativeName>
        <fullName evidence="1">Excinuclease ABC subunit C</fullName>
    </alternativeName>
</protein>
<proteinExistence type="inferred from homology"/>
<reference key="1">
    <citation type="journal article" date="2010" name="BMC Genomics">
        <title>Complete genome sequence and lifestyle of black-pigmented Corynebacterium aurimucosum ATCC 700975 (formerly C. nigricans CN-1) isolated from a vaginal swab of a woman with spontaneous abortion.</title>
        <authorList>
            <person name="Trost E."/>
            <person name="Gotker S."/>
            <person name="Schneider J."/>
            <person name="Schneiker-Bekel S."/>
            <person name="Szczepanowski R."/>
            <person name="Tilker A."/>
            <person name="Viehoever P."/>
            <person name="Arnold W."/>
            <person name="Bekel T."/>
            <person name="Blom J."/>
            <person name="Gartemann K.H."/>
            <person name="Linke B."/>
            <person name="Goesmann A."/>
            <person name="Puhler A."/>
            <person name="Shukla S.K."/>
            <person name="Tauch A."/>
        </authorList>
    </citation>
    <scope>NUCLEOTIDE SEQUENCE [LARGE SCALE GENOMIC DNA]</scope>
    <source>
        <strain>ATCC 700975 / DSM 44827 / CIP 107346 / CN-1</strain>
    </source>
</reference>
<gene>
    <name evidence="1" type="primary">uvrC</name>
    <name type="ordered locus">cauri_1196</name>
</gene>
<organism>
    <name type="scientific">Corynebacterium aurimucosum (strain ATCC 700975 / DSM 44827 / CIP 107346 / CN-1)</name>
    <name type="common">Corynebacterium nigricans</name>
    <dbReference type="NCBI Taxonomy" id="548476"/>
    <lineage>
        <taxon>Bacteria</taxon>
        <taxon>Bacillati</taxon>
        <taxon>Actinomycetota</taxon>
        <taxon>Actinomycetes</taxon>
        <taxon>Mycobacteriales</taxon>
        <taxon>Corynebacteriaceae</taxon>
        <taxon>Corynebacterium</taxon>
    </lineage>
</organism>
<dbReference type="EMBL" id="CP001601">
    <property type="protein sequence ID" value="ACP32789.1"/>
    <property type="molecule type" value="Genomic_DNA"/>
</dbReference>
<dbReference type="RefSeq" id="WP_010186773.1">
    <property type="nucleotide sequence ID" value="NC_012590.1"/>
</dbReference>
<dbReference type="SMR" id="C3PG35"/>
<dbReference type="STRING" id="548476.cauri_1196"/>
<dbReference type="GeneID" id="31923819"/>
<dbReference type="KEGG" id="car:cauri_1196"/>
<dbReference type="eggNOG" id="COG0322">
    <property type="taxonomic scope" value="Bacteria"/>
</dbReference>
<dbReference type="HOGENOM" id="CLU_014841_1_1_11"/>
<dbReference type="OrthoDB" id="9804933at2"/>
<dbReference type="Proteomes" id="UP000002077">
    <property type="component" value="Chromosome"/>
</dbReference>
<dbReference type="GO" id="GO:0005737">
    <property type="term" value="C:cytoplasm"/>
    <property type="evidence" value="ECO:0007669"/>
    <property type="project" value="UniProtKB-SubCell"/>
</dbReference>
<dbReference type="GO" id="GO:0009380">
    <property type="term" value="C:excinuclease repair complex"/>
    <property type="evidence" value="ECO:0007669"/>
    <property type="project" value="InterPro"/>
</dbReference>
<dbReference type="GO" id="GO:0003677">
    <property type="term" value="F:DNA binding"/>
    <property type="evidence" value="ECO:0007669"/>
    <property type="project" value="UniProtKB-UniRule"/>
</dbReference>
<dbReference type="GO" id="GO:0009381">
    <property type="term" value="F:excinuclease ABC activity"/>
    <property type="evidence" value="ECO:0007669"/>
    <property type="project" value="UniProtKB-UniRule"/>
</dbReference>
<dbReference type="GO" id="GO:0006289">
    <property type="term" value="P:nucleotide-excision repair"/>
    <property type="evidence" value="ECO:0007669"/>
    <property type="project" value="UniProtKB-UniRule"/>
</dbReference>
<dbReference type="GO" id="GO:0009432">
    <property type="term" value="P:SOS response"/>
    <property type="evidence" value="ECO:0007669"/>
    <property type="project" value="UniProtKB-UniRule"/>
</dbReference>
<dbReference type="CDD" id="cd10434">
    <property type="entry name" value="GIY-YIG_UvrC_Cho"/>
    <property type="match status" value="1"/>
</dbReference>
<dbReference type="FunFam" id="1.10.150.20:FF:000005">
    <property type="entry name" value="UvrABC system protein C"/>
    <property type="match status" value="1"/>
</dbReference>
<dbReference type="FunFam" id="3.30.420.340:FF:000003">
    <property type="entry name" value="UvrABC system protein C"/>
    <property type="match status" value="1"/>
</dbReference>
<dbReference type="FunFam" id="3.40.1440.10:FF:000001">
    <property type="entry name" value="UvrABC system protein C"/>
    <property type="match status" value="1"/>
</dbReference>
<dbReference type="Gene3D" id="1.10.150.20">
    <property type="entry name" value="5' to 3' exonuclease, C-terminal subdomain"/>
    <property type="match status" value="1"/>
</dbReference>
<dbReference type="Gene3D" id="3.40.1440.10">
    <property type="entry name" value="GIY-YIG endonuclease"/>
    <property type="match status" value="1"/>
</dbReference>
<dbReference type="Gene3D" id="4.10.860.10">
    <property type="entry name" value="UVR domain"/>
    <property type="match status" value="1"/>
</dbReference>
<dbReference type="Gene3D" id="3.30.420.340">
    <property type="entry name" value="UvrC, RNAse H endonuclease domain"/>
    <property type="match status" value="1"/>
</dbReference>
<dbReference type="HAMAP" id="MF_00203">
    <property type="entry name" value="UvrC"/>
    <property type="match status" value="1"/>
</dbReference>
<dbReference type="InterPro" id="IPR000305">
    <property type="entry name" value="GIY-YIG_endonuc"/>
</dbReference>
<dbReference type="InterPro" id="IPR035901">
    <property type="entry name" value="GIY-YIG_endonuc_sf"/>
</dbReference>
<dbReference type="InterPro" id="IPR047296">
    <property type="entry name" value="GIY-YIG_UvrC_Cho"/>
</dbReference>
<dbReference type="InterPro" id="IPR003583">
    <property type="entry name" value="Hlx-hairpin-Hlx_DNA-bd_motif"/>
</dbReference>
<dbReference type="InterPro" id="IPR010994">
    <property type="entry name" value="RuvA_2-like"/>
</dbReference>
<dbReference type="InterPro" id="IPR001943">
    <property type="entry name" value="UVR_dom"/>
</dbReference>
<dbReference type="InterPro" id="IPR036876">
    <property type="entry name" value="UVR_dom_sf"/>
</dbReference>
<dbReference type="InterPro" id="IPR050066">
    <property type="entry name" value="UvrABC_protein_C"/>
</dbReference>
<dbReference type="InterPro" id="IPR004791">
    <property type="entry name" value="UvrC"/>
</dbReference>
<dbReference type="InterPro" id="IPR001162">
    <property type="entry name" value="UvrC_RNase_H_dom"/>
</dbReference>
<dbReference type="InterPro" id="IPR038476">
    <property type="entry name" value="UvrC_RNase_H_dom_sf"/>
</dbReference>
<dbReference type="NCBIfam" id="NF001824">
    <property type="entry name" value="PRK00558.1-5"/>
    <property type="match status" value="1"/>
</dbReference>
<dbReference type="PANTHER" id="PTHR30562:SF1">
    <property type="entry name" value="UVRABC SYSTEM PROTEIN C"/>
    <property type="match status" value="1"/>
</dbReference>
<dbReference type="PANTHER" id="PTHR30562">
    <property type="entry name" value="UVRC/OXIDOREDUCTASE"/>
    <property type="match status" value="1"/>
</dbReference>
<dbReference type="Pfam" id="PF01541">
    <property type="entry name" value="GIY-YIG"/>
    <property type="match status" value="1"/>
</dbReference>
<dbReference type="Pfam" id="PF14520">
    <property type="entry name" value="HHH_5"/>
    <property type="match status" value="1"/>
</dbReference>
<dbReference type="Pfam" id="PF02151">
    <property type="entry name" value="UVR"/>
    <property type="match status" value="1"/>
</dbReference>
<dbReference type="Pfam" id="PF22920">
    <property type="entry name" value="UvrC_RNaseH"/>
    <property type="match status" value="1"/>
</dbReference>
<dbReference type="Pfam" id="PF08459">
    <property type="entry name" value="UvrC_RNaseH_dom"/>
    <property type="match status" value="1"/>
</dbReference>
<dbReference type="SMART" id="SM00465">
    <property type="entry name" value="GIYc"/>
    <property type="match status" value="1"/>
</dbReference>
<dbReference type="SMART" id="SM00278">
    <property type="entry name" value="HhH1"/>
    <property type="match status" value="2"/>
</dbReference>
<dbReference type="SUPFAM" id="SSF46600">
    <property type="entry name" value="C-terminal UvrC-binding domain of UvrB"/>
    <property type="match status" value="1"/>
</dbReference>
<dbReference type="SUPFAM" id="SSF82771">
    <property type="entry name" value="GIY-YIG endonuclease"/>
    <property type="match status" value="1"/>
</dbReference>
<dbReference type="SUPFAM" id="SSF47781">
    <property type="entry name" value="RuvA domain 2-like"/>
    <property type="match status" value="1"/>
</dbReference>
<dbReference type="PROSITE" id="PS50164">
    <property type="entry name" value="GIY_YIG"/>
    <property type="match status" value="1"/>
</dbReference>
<dbReference type="PROSITE" id="PS50151">
    <property type="entry name" value="UVR"/>
    <property type="match status" value="1"/>
</dbReference>
<dbReference type="PROSITE" id="PS50165">
    <property type="entry name" value="UVRC"/>
    <property type="match status" value="1"/>
</dbReference>
<name>UVRC_CORA7</name>
<sequence length="684" mass="77252">MADPSKYRPAPGSIPTDPGVYKFRDENRRVIYVGKAKNLRARLSNYFQDITQLHPRTRQMVLTAASVEWTVVASEVEALQLEYTWIKRFDPRFNVMYRDDKTYPMLAVSVGESIPRAFFYRGPRRKGVRYFGPYSHAWAVRESLDLLTRIFPMRTCAKGVFNRHERLGRPCLLGYIGKCDAPCIGRVSPEEHRETVNQLISFMNGNTAPVRKRVTQRMEEAAENLEFELAARLRDDLGAIDKLMEQQAVVLPDGTDADLIAFSSDELEAAVQIFHVRTGRIRGQRGWVVERSGDQATTDVVEEGQADPGLPALIQNFLIQFYSDAVERQRQEAAEDAKLERRGVDQESHAEPRQGNAIPREILVQALPEEAEEVKIVLEELRGAQIDVRVPQRGDKRALLETVERNAKEQLKQHKLKRVGDLTARSAALQELQEALGMDSAPLRIECTDISHIQGTDVVASLVVFEDGLPRKSDYRRYRIKEAAGDGRSNDVGSIAEVTRRRFKHHHDDKRAVPDEELENTTFAEEMVREEAASQTKRSSYPPQLFIVDGGAPQVAAAQAVFDELGIVDVTLIGLAKRLEEVWVPGDDEPVILPRNSQALFLLQHLRDEAHRVAISYHRQQRSKRMRSSVLDAVPGLGPQRRTDLVKHFGSVKKLKEASVEEIAEVKGFGPKLAQTVFDHLHAS</sequence>
<evidence type="ECO:0000255" key="1">
    <source>
        <dbReference type="HAMAP-Rule" id="MF_00203"/>
    </source>
</evidence>
<evidence type="ECO:0000256" key="2">
    <source>
        <dbReference type="SAM" id="MobiDB-lite"/>
    </source>
</evidence>
<keyword id="KW-0963">Cytoplasm</keyword>
<keyword id="KW-0227">DNA damage</keyword>
<keyword id="KW-0228">DNA excision</keyword>
<keyword id="KW-0234">DNA repair</keyword>
<keyword id="KW-0267">Excision nuclease</keyword>
<keyword id="KW-1185">Reference proteome</keyword>
<keyword id="KW-0742">SOS response</keyword>
<feature type="chain" id="PRO_1000200578" description="UvrABC system protein C">
    <location>
        <begin position="1"/>
        <end position="684"/>
    </location>
</feature>
<feature type="domain" description="GIY-YIG" evidence="1">
    <location>
        <begin position="16"/>
        <end position="95"/>
    </location>
</feature>
<feature type="domain" description="UVR" evidence="1">
    <location>
        <begin position="208"/>
        <end position="243"/>
    </location>
</feature>
<feature type="region of interest" description="Disordered" evidence="2">
    <location>
        <begin position="332"/>
        <end position="357"/>
    </location>
</feature>
<feature type="compositionally biased region" description="Basic and acidic residues" evidence="2">
    <location>
        <begin position="332"/>
        <end position="352"/>
    </location>
</feature>